<keyword id="KW-0143">Chaperone</keyword>
<keyword id="KW-0963">Cytoplasm</keyword>
<keyword id="KW-0346">Stress response</keyword>
<name>IBPA_ECOHS</name>
<feature type="chain" id="PRO_1000070877" description="Small heat shock protein IbpA">
    <location>
        <begin position="1"/>
        <end position="137"/>
    </location>
</feature>
<feature type="domain" description="sHSP" evidence="2">
    <location>
        <begin position="28"/>
        <end position="137"/>
    </location>
</feature>
<protein>
    <recommendedName>
        <fullName evidence="1">Small heat shock protein IbpA</fullName>
    </recommendedName>
    <alternativeName>
        <fullName evidence="1">16 kDa heat shock protein A</fullName>
    </alternativeName>
</protein>
<accession>A8A6E7</accession>
<evidence type="ECO:0000255" key="1">
    <source>
        <dbReference type="HAMAP-Rule" id="MF_02000"/>
    </source>
</evidence>
<evidence type="ECO:0000255" key="2">
    <source>
        <dbReference type="PROSITE-ProRule" id="PRU00285"/>
    </source>
</evidence>
<comment type="function">
    <text evidence="1">Associates with aggregated proteins, together with IbpB, to stabilize and protect them from irreversible denaturation and extensive proteolysis during heat shock and oxidative stress. Aggregated proteins bound to the IbpAB complex are more efficiently refolded and reactivated by the ATP-dependent chaperone systems ClpB and DnaK/DnaJ/GrpE. Its activity is ATP-independent.</text>
</comment>
<comment type="subunit">
    <text evidence="1">Monomer. Forms homomultimers of about 100-150 subunits at optimal growth temperatures. Conformation changes to monomers at high temperatures or high ionic concentrations.</text>
</comment>
<comment type="subcellular location">
    <subcellularLocation>
        <location evidence="1">Cytoplasm</location>
    </subcellularLocation>
</comment>
<comment type="similarity">
    <text evidence="1 2">Belongs to the small heat shock protein (HSP20) family.</text>
</comment>
<sequence>MRNFDLSPLYRSAIGFDRLFNHLENNQSQSNGGYPPYNVELVDENHYRIAIAVAGFAESELEITAQDNLLVVKGAHADEQKERTYLYQGIAERNFERKFQLAENIHVRGANLVNGLLYIDLERVIPEAKKPRRIEIN</sequence>
<proteinExistence type="inferred from homology"/>
<gene>
    <name evidence="1" type="primary">ibpA</name>
    <name type="ordered locus">EcHS_A3899</name>
</gene>
<organism>
    <name type="scientific">Escherichia coli O9:H4 (strain HS)</name>
    <dbReference type="NCBI Taxonomy" id="331112"/>
    <lineage>
        <taxon>Bacteria</taxon>
        <taxon>Pseudomonadati</taxon>
        <taxon>Pseudomonadota</taxon>
        <taxon>Gammaproteobacteria</taxon>
        <taxon>Enterobacterales</taxon>
        <taxon>Enterobacteriaceae</taxon>
        <taxon>Escherichia</taxon>
    </lineage>
</organism>
<dbReference type="EMBL" id="CP000802">
    <property type="protein sequence ID" value="ABV08101.1"/>
    <property type="molecule type" value="Genomic_DNA"/>
</dbReference>
<dbReference type="RefSeq" id="WP_001243437.1">
    <property type="nucleotide sequence ID" value="NC_009800.1"/>
</dbReference>
<dbReference type="SMR" id="A8A6E7"/>
<dbReference type="GeneID" id="93778428"/>
<dbReference type="KEGG" id="ecx:EcHS_A3899"/>
<dbReference type="HOGENOM" id="CLU_046737_4_2_6"/>
<dbReference type="GO" id="GO:0005737">
    <property type="term" value="C:cytoplasm"/>
    <property type="evidence" value="ECO:0007669"/>
    <property type="project" value="UniProtKB-SubCell"/>
</dbReference>
<dbReference type="GO" id="GO:0050821">
    <property type="term" value="P:protein stabilization"/>
    <property type="evidence" value="ECO:0007669"/>
    <property type="project" value="UniProtKB-UniRule"/>
</dbReference>
<dbReference type="CDD" id="cd06470">
    <property type="entry name" value="ACD_IbpA-B_like"/>
    <property type="match status" value="1"/>
</dbReference>
<dbReference type="FunFam" id="2.60.40.790:FF:000002">
    <property type="entry name" value="Small heat shock protein IbpA"/>
    <property type="match status" value="1"/>
</dbReference>
<dbReference type="Gene3D" id="2.60.40.790">
    <property type="match status" value="1"/>
</dbReference>
<dbReference type="HAMAP" id="MF_02000">
    <property type="entry name" value="HSP20_IbpA"/>
    <property type="match status" value="1"/>
</dbReference>
<dbReference type="InterPro" id="IPR002068">
    <property type="entry name" value="A-crystallin/Hsp20_dom"/>
</dbReference>
<dbReference type="InterPro" id="IPR037913">
    <property type="entry name" value="ACD_IbpA/B"/>
</dbReference>
<dbReference type="InterPro" id="IPR008978">
    <property type="entry name" value="HSP20-like_chaperone"/>
</dbReference>
<dbReference type="InterPro" id="IPR023728">
    <property type="entry name" value="HSP20_IbpA"/>
</dbReference>
<dbReference type="NCBIfam" id="NF008013">
    <property type="entry name" value="PRK10743.1"/>
    <property type="match status" value="1"/>
</dbReference>
<dbReference type="PANTHER" id="PTHR47062">
    <property type="match status" value="1"/>
</dbReference>
<dbReference type="PANTHER" id="PTHR47062:SF1">
    <property type="entry name" value="SMALL HEAT SHOCK PROTEIN IBPA"/>
    <property type="match status" value="1"/>
</dbReference>
<dbReference type="Pfam" id="PF00011">
    <property type="entry name" value="HSP20"/>
    <property type="match status" value="1"/>
</dbReference>
<dbReference type="SUPFAM" id="SSF49764">
    <property type="entry name" value="HSP20-like chaperones"/>
    <property type="match status" value="1"/>
</dbReference>
<dbReference type="PROSITE" id="PS01031">
    <property type="entry name" value="SHSP"/>
    <property type="match status" value="1"/>
</dbReference>
<reference key="1">
    <citation type="journal article" date="2008" name="J. Bacteriol.">
        <title>The pangenome structure of Escherichia coli: comparative genomic analysis of E. coli commensal and pathogenic isolates.</title>
        <authorList>
            <person name="Rasko D.A."/>
            <person name="Rosovitz M.J."/>
            <person name="Myers G.S.A."/>
            <person name="Mongodin E.F."/>
            <person name="Fricke W.F."/>
            <person name="Gajer P."/>
            <person name="Crabtree J."/>
            <person name="Sebaihia M."/>
            <person name="Thomson N.R."/>
            <person name="Chaudhuri R."/>
            <person name="Henderson I.R."/>
            <person name="Sperandio V."/>
            <person name="Ravel J."/>
        </authorList>
    </citation>
    <scope>NUCLEOTIDE SEQUENCE [LARGE SCALE GENOMIC DNA]</scope>
    <source>
        <strain>HS</strain>
    </source>
</reference>